<sequence length="503" mass="54880">MEFSVKSGSPEKQRSACIVVGVFEPRRLSPIAEQLDKISDGYISALLRRGELEGKPGQTLLLHHVPNVLSERILLIGCGKERELDERQYKQVIQKTINTLNDTGSMEAVCFLTELHVKGRNNYWKVRQAVETAKETLYSFDQLKTNKSEPRRPLRKMVFNVPTRRELTSGERAIQHGLAIAAGIKAAKDLGNMPPNICNAAYLASQARQLADSYSKNVITRVIGEQQMKELGMHSYLAVGQGSQNESLMSVIEYKGNASEDARPIVLVGKGLTFDSGGISIKPSEGMDEMKYDMCGAAAVYGVMRMVAELQLPINVIGVLAGCENMPGGRAYRPGDVLTTMSGQTVEVLNTDAEGRLVLCDVLTYVERFEPEAVIDVATLTGACVIALGHHITGLMANHNPLAHELIAASEQSGDRAWRLPLGDEYQEQLESNFADMANIGGRPGGAITAGCFLSRFTRKYNWAHLDIAGTAWRSGKAKGATGRPVALLAQFLLNRAGFNGEE</sequence>
<reference key="1">
    <citation type="journal article" date="2007" name="J. Bacteriol.">
        <title>The genome sequence of avian pathogenic Escherichia coli strain O1:K1:H7 shares strong similarities with human extraintestinal pathogenic E. coli genomes.</title>
        <authorList>
            <person name="Johnson T.J."/>
            <person name="Kariyawasam S."/>
            <person name="Wannemuehler Y."/>
            <person name="Mangiamele P."/>
            <person name="Johnson S.J."/>
            <person name="Doetkott C."/>
            <person name="Skyberg J.A."/>
            <person name="Lynne A.M."/>
            <person name="Johnson J.R."/>
            <person name="Nolan L.K."/>
        </authorList>
    </citation>
    <scope>NUCLEOTIDE SEQUENCE [LARGE SCALE GENOMIC DNA]</scope>
</reference>
<comment type="function">
    <text evidence="1">Presumably involved in the processing and regular turnover of intracellular proteins. Catalyzes the removal of unsubstituted N-terminal amino acids from various peptides.</text>
</comment>
<comment type="catalytic activity">
    <reaction evidence="1">
        <text>Release of an N-terminal amino acid, Xaa-|-Yaa-, in which Xaa is preferably Leu, but may be other amino acids including Pro although not Arg or Lys, and Yaa may be Pro. Amino acid amides and methyl esters are also readily hydrolyzed, but rates on arylamides are exceedingly low.</text>
        <dbReference type="EC" id="3.4.11.1"/>
    </reaction>
</comment>
<comment type="catalytic activity">
    <reaction evidence="1">
        <text>Release of an N-terminal amino acid, preferentially leucine, but not glutamic or aspartic acids.</text>
        <dbReference type="EC" id="3.4.11.10"/>
    </reaction>
</comment>
<comment type="cofactor">
    <cofactor evidence="1">
        <name>Mn(2+)</name>
        <dbReference type="ChEBI" id="CHEBI:29035"/>
    </cofactor>
    <text evidence="1">Binds 2 manganese ions per subunit.</text>
</comment>
<comment type="subcellular location">
    <subcellularLocation>
        <location evidence="1">Cytoplasm</location>
    </subcellularLocation>
</comment>
<comment type="similarity">
    <text evidence="1">Belongs to the peptidase M17 family.</text>
</comment>
<proteinExistence type="inferred from homology"/>
<gene>
    <name evidence="1" type="primary">pepA</name>
    <name type="ordered locus">Ecok1_43090</name>
    <name type="ORF">APECO1_2134</name>
</gene>
<evidence type="ECO:0000255" key="1">
    <source>
        <dbReference type="HAMAP-Rule" id="MF_00181"/>
    </source>
</evidence>
<accession>A1AJG3</accession>
<feature type="chain" id="PRO_1000019914" description="Probable cytosol aminopeptidase">
    <location>
        <begin position="1"/>
        <end position="503"/>
    </location>
</feature>
<feature type="active site" evidence="1">
    <location>
        <position position="282"/>
    </location>
</feature>
<feature type="active site" evidence="1">
    <location>
        <position position="356"/>
    </location>
</feature>
<feature type="binding site" evidence="1">
    <location>
        <position position="270"/>
    </location>
    <ligand>
        <name>Mn(2+)</name>
        <dbReference type="ChEBI" id="CHEBI:29035"/>
        <label>2</label>
    </ligand>
</feature>
<feature type="binding site" evidence="1">
    <location>
        <position position="275"/>
    </location>
    <ligand>
        <name>Mn(2+)</name>
        <dbReference type="ChEBI" id="CHEBI:29035"/>
        <label>1</label>
    </ligand>
</feature>
<feature type="binding site" evidence="1">
    <location>
        <position position="275"/>
    </location>
    <ligand>
        <name>Mn(2+)</name>
        <dbReference type="ChEBI" id="CHEBI:29035"/>
        <label>2</label>
    </ligand>
</feature>
<feature type="binding site" evidence="1">
    <location>
        <position position="293"/>
    </location>
    <ligand>
        <name>Mn(2+)</name>
        <dbReference type="ChEBI" id="CHEBI:29035"/>
        <label>2</label>
    </ligand>
</feature>
<feature type="binding site" evidence="1">
    <location>
        <position position="352"/>
    </location>
    <ligand>
        <name>Mn(2+)</name>
        <dbReference type="ChEBI" id="CHEBI:29035"/>
        <label>1</label>
    </ligand>
</feature>
<feature type="binding site" evidence="1">
    <location>
        <position position="354"/>
    </location>
    <ligand>
        <name>Mn(2+)</name>
        <dbReference type="ChEBI" id="CHEBI:29035"/>
        <label>1</label>
    </ligand>
</feature>
<feature type="binding site" evidence="1">
    <location>
        <position position="354"/>
    </location>
    <ligand>
        <name>Mn(2+)</name>
        <dbReference type="ChEBI" id="CHEBI:29035"/>
        <label>2</label>
    </ligand>
</feature>
<dbReference type="EC" id="3.4.11.1" evidence="1"/>
<dbReference type="EC" id="3.4.11.10" evidence="1"/>
<dbReference type="EMBL" id="CP000468">
    <property type="protein sequence ID" value="ABJ03803.1"/>
    <property type="molecule type" value="Genomic_DNA"/>
</dbReference>
<dbReference type="RefSeq" id="WP_000397144.1">
    <property type="nucleotide sequence ID" value="NZ_CADILS010000070.1"/>
</dbReference>
<dbReference type="SMR" id="A1AJG3"/>
<dbReference type="MEROPS" id="M17.003"/>
<dbReference type="GeneID" id="93777558"/>
<dbReference type="KEGG" id="ecv:APECO1_2134"/>
<dbReference type="HOGENOM" id="CLU_013734_2_2_6"/>
<dbReference type="Proteomes" id="UP000008216">
    <property type="component" value="Chromosome"/>
</dbReference>
<dbReference type="GO" id="GO:0005737">
    <property type="term" value="C:cytoplasm"/>
    <property type="evidence" value="ECO:0007669"/>
    <property type="project" value="UniProtKB-SubCell"/>
</dbReference>
<dbReference type="GO" id="GO:0030145">
    <property type="term" value="F:manganese ion binding"/>
    <property type="evidence" value="ECO:0007669"/>
    <property type="project" value="UniProtKB-UniRule"/>
</dbReference>
<dbReference type="GO" id="GO:0070006">
    <property type="term" value="F:metalloaminopeptidase activity"/>
    <property type="evidence" value="ECO:0007669"/>
    <property type="project" value="InterPro"/>
</dbReference>
<dbReference type="GO" id="GO:0006508">
    <property type="term" value="P:proteolysis"/>
    <property type="evidence" value="ECO:0007669"/>
    <property type="project" value="UniProtKB-KW"/>
</dbReference>
<dbReference type="CDD" id="cd00433">
    <property type="entry name" value="Peptidase_M17"/>
    <property type="match status" value="1"/>
</dbReference>
<dbReference type="FunFam" id="3.40.220.10:FF:000001">
    <property type="entry name" value="Probable cytosol aminopeptidase"/>
    <property type="match status" value="1"/>
</dbReference>
<dbReference type="FunFam" id="3.40.630.10:FF:000004">
    <property type="entry name" value="Probable cytosol aminopeptidase"/>
    <property type="match status" value="1"/>
</dbReference>
<dbReference type="Gene3D" id="3.40.220.10">
    <property type="entry name" value="Leucine Aminopeptidase, subunit E, domain 1"/>
    <property type="match status" value="1"/>
</dbReference>
<dbReference type="Gene3D" id="3.40.630.10">
    <property type="entry name" value="Zn peptidases"/>
    <property type="match status" value="1"/>
</dbReference>
<dbReference type="HAMAP" id="MF_00181">
    <property type="entry name" value="Cytosol_peptidase_M17"/>
    <property type="match status" value="1"/>
</dbReference>
<dbReference type="InterPro" id="IPR011356">
    <property type="entry name" value="Leucine_aapep/pepB"/>
</dbReference>
<dbReference type="InterPro" id="IPR043472">
    <property type="entry name" value="Macro_dom-like"/>
</dbReference>
<dbReference type="InterPro" id="IPR000819">
    <property type="entry name" value="Peptidase_M17_C"/>
</dbReference>
<dbReference type="InterPro" id="IPR023042">
    <property type="entry name" value="Peptidase_M17_leu_NH2_pept"/>
</dbReference>
<dbReference type="InterPro" id="IPR008283">
    <property type="entry name" value="Peptidase_M17_N"/>
</dbReference>
<dbReference type="NCBIfam" id="NF002072">
    <property type="entry name" value="PRK00913.1-1"/>
    <property type="match status" value="1"/>
</dbReference>
<dbReference type="NCBIfam" id="NF002073">
    <property type="entry name" value="PRK00913.1-2"/>
    <property type="match status" value="1"/>
</dbReference>
<dbReference type="NCBIfam" id="NF002074">
    <property type="entry name" value="PRK00913.1-4"/>
    <property type="match status" value="1"/>
</dbReference>
<dbReference type="PANTHER" id="PTHR11963:SF23">
    <property type="entry name" value="CYTOSOL AMINOPEPTIDASE"/>
    <property type="match status" value="1"/>
</dbReference>
<dbReference type="PANTHER" id="PTHR11963">
    <property type="entry name" value="LEUCINE AMINOPEPTIDASE-RELATED"/>
    <property type="match status" value="1"/>
</dbReference>
<dbReference type="Pfam" id="PF00883">
    <property type="entry name" value="Peptidase_M17"/>
    <property type="match status" value="1"/>
</dbReference>
<dbReference type="Pfam" id="PF02789">
    <property type="entry name" value="Peptidase_M17_N"/>
    <property type="match status" value="1"/>
</dbReference>
<dbReference type="PRINTS" id="PR00481">
    <property type="entry name" value="LAMNOPPTDASE"/>
</dbReference>
<dbReference type="SUPFAM" id="SSF52949">
    <property type="entry name" value="Macro domain-like"/>
    <property type="match status" value="1"/>
</dbReference>
<dbReference type="SUPFAM" id="SSF53187">
    <property type="entry name" value="Zn-dependent exopeptidases"/>
    <property type="match status" value="1"/>
</dbReference>
<dbReference type="PROSITE" id="PS00631">
    <property type="entry name" value="CYTOSOL_AP"/>
    <property type="match status" value="1"/>
</dbReference>
<protein>
    <recommendedName>
        <fullName evidence="1">Probable cytosol aminopeptidase</fullName>
        <ecNumber evidence="1">3.4.11.1</ecNumber>
    </recommendedName>
    <alternativeName>
        <fullName evidence="1">Leucine aminopeptidase</fullName>
        <shortName evidence="1">LAP</shortName>
        <ecNumber evidence="1">3.4.11.10</ecNumber>
    </alternativeName>
    <alternativeName>
        <fullName evidence="1">Leucyl aminopeptidase</fullName>
    </alternativeName>
</protein>
<organism>
    <name type="scientific">Escherichia coli O1:K1 / APEC</name>
    <dbReference type="NCBI Taxonomy" id="405955"/>
    <lineage>
        <taxon>Bacteria</taxon>
        <taxon>Pseudomonadati</taxon>
        <taxon>Pseudomonadota</taxon>
        <taxon>Gammaproteobacteria</taxon>
        <taxon>Enterobacterales</taxon>
        <taxon>Enterobacteriaceae</taxon>
        <taxon>Escherichia</taxon>
    </lineage>
</organism>
<name>AMPA_ECOK1</name>
<keyword id="KW-0031">Aminopeptidase</keyword>
<keyword id="KW-0963">Cytoplasm</keyword>
<keyword id="KW-0378">Hydrolase</keyword>
<keyword id="KW-0464">Manganese</keyword>
<keyword id="KW-0479">Metal-binding</keyword>
<keyword id="KW-0645">Protease</keyword>
<keyword id="KW-1185">Reference proteome</keyword>